<accession>Q63SH6</accession>
<evidence type="ECO:0000255" key="1">
    <source>
        <dbReference type="HAMAP-Rule" id="MF_00229"/>
    </source>
</evidence>
<reference key="1">
    <citation type="journal article" date="2004" name="Proc. Natl. Acad. Sci. U.S.A.">
        <title>Genomic plasticity of the causative agent of melioidosis, Burkholderia pseudomallei.</title>
        <authorList>
            <person name="Holden M.T.G."/>
            <person name="Titball R.W."/>
            <person name="Peacock S.J."/>
            <person name="Cerdeno-Tarraga A.-M."/>
            <person name="Atkins T."/>
            <person name="Crossman L.C."/>
            <person name="Pitt T."/>
            <person name="Churcher C."/>
            <person name="Mungall K.L."/>
            <person name="Bentley S.D."/>
            <person name="Sebaihia M."/>
            <person name="Thomson N.R."/>
            <person name="Bason N."/>
            <person name="Beacham I.R."/>
            <person name="Brooks K."/>
            <person name="Brown K.A."/>
            <person name="Brown N.F."/>
            <person name="Challis G.L."/>
            <person name="Cherevach I."/>
            <person name="Chillingworth T."/>
            <person name="Cronin A."/>
            <person name="Crossett B."/>
            <person name="Davis P."/>
            <person name="DeShazer D."/>
            <person name="Feltwell T."/>
            <person name="Fraser A."/>
            <person name="Hance Z."/>
            <person name="Hauser H."/>
            <person name="Holroyd S."/>
            <person name="Jagels K."/>
            <person name="Keith K.E."/>
            <person name="Maddison M."/>
            <person name="Moule S."/>
            <person name="Price C."/>
            <person name="Quail M.A."/>
            <person name="Rabbinowitsch E."/>
            <person name="Rutherford K."/>
            <person name="Sanders M."/>
            <person name="Simmonds M."/>
            <person name="Songsivilai S."/>
            <person name="Stevens K."/>
            <person name="Tumapa S."/>
            <person name="Vesaratchavest M."/>
            <person name="Whitehead S."/>
            <person name="Yeats C."/>
            <person name="Barrell B.G."/>
            <person name="Oyston P.C.F."/>
            <person name="Parkhill J."/>
        </authorList>
    </citation>
    <scope>NUCLEOTIDE SEQUENCE [LARGE SCALE GENOMIC DNA]</scope>
    <source>
        <strain>K96243</strain>
    </source>
</reference>
<comment type="catalytic activity">
    <reaction evidence="1">
        <text>L-histidine = trans-urocanate + NH4(+)</text>
        <dbReference type="Rhea" id="RHEA:21232"/>
        <dbReference type="ChEBI" id="CHEBI:17771"/>
        <dbReference type="ChEBI" id="CHEBI:28938"/>
        <dbReference type="ChEBI" id="CHEBI:57595"/>
        <dbReference type="EC" id="4.3.1.3"/>
    </reaction>
</comment>
<comment type="pathway">
    <text evidence="1">Amino-acid degradation; L-histidine degradation into L-glutamate; N-formimidoyl-L-glutamate from L-histidine: step 1/3.</text>
</comment>
<comment type="subcellular location">
    <subcellularLocation>
        <location evidence="1">Cytoplasm</location>
    </subcellularLocation>
</comment>
<comment type="PTM">
    <text evidence="1">Contains an active site 4-methylidene-imidazol-5-one (MIO), which is formed autocatalytically by cyclization and dehydration of residues Ala-Ser-Gly.</text>
</comment>
<comment type="similarity">
    <text evidence="1">Belongs to the PAL/histidase family.</text>
</comment>
<proteinExistence type="inferred from homology"/>
<name>HUTH_BURPS</name>
<protein>
    <recommendedName>
        <fullName evidence="1">Histidine ammonia-lyase</fullName>
        <shortName evidence="1">Histidase</shortName>
        <ecNumber evidence="1">4.3.1.3</ecNumber>
    </recommendedName>
</protein>
<gene>
    <name evidence="1" type="primary">hutH</name>
    <name type="ordered locus">BPSL2344</name>
</gene>
<feature type="chain" id="PRO_0000160998" description="Histidine ammonia-lyase">
    <location>
        <begin position="1"/>
        <end position="507"/>
    </location>
</feature>
<feature type="modified residue" description="2,3-didehydroalanine (Ser)" evidence="1">
    <location>
        <position position="142"/>
    </location>
</feature>
<feature type="cross-link" description="5-imidazolinone (Ala-Gly)" evidence="1">
    <location>
        <begin position="141"/>
        <end position="143"/>
    </location>
</feature>
<dbReference type="EC" id="4.3.1.3" evidence="1"/>
<dbReference type="EMBL" id="BX571965">
    <property type="protein sequence ID" value="CAH36347.1"/>
    <property type="molecule type" value="Genomic_DNA"/>
</dbReference>
<dbReference type="RefSeq" id="WP_004527399.1">
    <property type="nucleotide sequence ID" value="NZ_CP009538.1"/>
</dbReference>
<dbReference type="RefSeq" id="YP_108940.1">
    <property type="nucleotide sequence ID" value="NC_006350.1"/>
</dbReference>
<dbReference type="SMR" id="Q63SH6"/>
<dbReference type="STRING" id="272560.BPSL2344"/>
<dbReference type="GeneID" id="93060915"/>
<dbReference type="KEGG" id="bps:BPSL2344"/>
<dbReference type="PATRIC" id="fig|272560.51.peg.3075"/>
<dbReference type="eggNOG" id="COG2986">
    <property type="taxonomic scope" value="Bacteria"/>
</dbReference>
<dbReference type="UniPathway" id="UPA00379">
    <property type="reaction ID" value="UER00549"/>
</dbReference>
<dbReference type="Proteomes" id="UP000000605">
    <property type="component" value="Chromosome 1"/>
</dbReference>
<dbReference type="GO" id="GO:0005737">
    <property type="term" value="C:cytoplasm"/>
    <property type="evidence" value="ECO:0007669"/>
    <property type="project" value="UniProtKB-SubCell"/>
</dbReference>
<dbReference type="GO" id="GO:0004397">
    <property type="term" value="F:histidine ammonia-lyase activity"/>
    <property type="evidence" value="ECO:0007669"/>
    <property type="project" value="UniProtKB-UniRule"/>
</dbReference>
<dbReference type="GO" id="GO:0019556">
    <property type="term" value="P:L-histidine catabolic process to glutamate and formamide"/>
    <property type="evidence" value="ECO:0007669"/>
    <property type="project" value="UniProtKB-UniPathway"/>
</dbReference>
<dbReference type="GO" id="GO:0019557">
    <property type="term" value="P:L-histidine catabolic process to glutamate and formate"/>
    <property type="evidence" value="ECO:0007669"/>
    <property type="project" value="UniProtKB-UniPathway"/>
</dbReference>
<dbReference type="CDD" id="cd00332">
    <property type="entry name" value="PAL-HAL"/>
    <property type="match status" value="1"/>
</dbReference>
<dbReference type="FunFam" id="1.10.275.10:FF:000005">
    <property type="entry name" value="Histidine ammonia-lyase"/>
    <property type="match status" value="1"/>
</dbReference>
<dbReference type="FunFam" id="1.20.200.10:FF:000003">
    <property type="entry name" value="Histidine ammonia-lyase"/>
    <property type="match status" value="1"/>
</dbReference>
<dbReference type="Gene3D" id="1.20.200.10">
    <property type="entry name" value="Fumarase/aspartase (Central domain)"/>
    <property type="match status" value="1"/>
</dbReference>
<dbReference type="Gene3D" id="1.10.275.10">
    <property type="entry name" value="Fumarase/aspartase (N-terminal domain)"/>
    <property type="match status" value="1"/>
</dbReference>
<dbReference type="HAMAP" id="MF_00229">
    <property type="entry name" value="His_ammonia_lyase"/>
    <property type="match status" value="1"/>
</dbReference>
<dbReference type="InterPro" id="IPR001106">
    <property type="entry name" value="Aromatic_Lyase"/>
</dbReference>
<dbReference type="InterPro" id="IPR024083">
    <property type="entry name" value="Fumarase/histidase_N"/>
</dbReference>
<dbReference type="InterPro" id="IPR005921">
    <property type="entry name" value="HutH"/>
</dbReference>
<dbReference type="InterPro" id="IPR008948">
    <property type="entry name" value="L-Aspartase-like"/>
</dbReference>
<dbReference type="InterPro" id="IPR022313">
    <property type="entry name" value="Phe/His_NH3-lyase_AS"/>
</dbReference>
<dbReference type="NCBIfam" id="TIGR01225">
    <property type="entry name" value="hutH"/>
    <property type="match status" value="1"/>
</dbReference>
<dbReference type="NCBIfam" id="NF006871">
    <property type="entry name" value="PRK09367.1"/>
    <property type="match status" value="1"/>
</dbReference>
<dbReference type="PANTHER" id="PTHR10362">
    <property type="entry name" value="HISTIDINE AMMONIA-LYASE"/>
    <property type="match status" value="1"/>
</dbReference>
<dbReference type="Pfam" id="PF00221">
    <property type="entry name" value="Lyase_aromatic"/>
    <property type="match status" value="1"/>
</dbReference>
<dbReference type="SUPFAM" id="SSF48557">
    <property type="entry name" value="L-aspartase-like"/>
    <property type="match status" value="1"/>
</dbReference>
<dbReference type="PROSITE" id="PS00488">
    <property type="entry name" value="PAL_HISTIDASE"/>
    <property type="match status" value="1"/>
</dbReference>
<keyword id="KW-0963">Cytoplasm</keyword>
<keyword id="KW-0369">Histidine metabolism</keyword>
<keyword id="KW-0456">Lyase</keyword>
<keyword id="KW-1185">Reference proteome</keyword>
<organism>
    <name type="scientific">Burkholderia pseudomallei (strain K96243)</name>
    <dbReference type="NCBI Taxonomy" id="272560"/>
    <lineage>
        <taxon>Bacteria</taxon>
        <taxon>Pseudomonadati</taxon>
        <taxon>Pseudomonadota</taxon>
        <taxon>Betaproteobacteria</taxon>
        <taxon>Burkholderiales</taxon>
        <taxon>Burkholderiaceae</taxon>
        <taxon>Burkholderia</taxon>
        <taxon>pseudomallei group</taxon>
    </lineage>
</organism>
<sequence length="507" mass="53111">MITLTPGRLTLPQLRRIARENVQIALDPASFAAIDRGAQAVADIAAKGEPAYGINTGFGRLASTHIPHDQLELLQKNLVLSHAVGVGEPMARPVVRLLMALKLSSLGRGHSGIRRVVMDALVTLFNADVLPLIPVKGSVGASGDLAPLAHMSAVLLGIGDVFIRGERASAAEGLRVAGLAPLTLEAKEGLALLNGTQASTALALDNLFAIEDLYRTALVSGALSVDAAAGSVKPFDARIHELRGHRGQIDAAAAYRSLLDGSAINVSHRDCDKVQDPYSLRCQPQVMGACLDQIRHAAGVLLIEANAVSDNPLIFPDTGEVLSGGNFHAEPVAFAADNLAIAAAEIGALAERRIALLIDATLSGLPPFLVKDGGVNSGFMIAHVTAAALASENKTLAHPASVDSLPTSANQEDHVSMATFAARKLADIAENVANILAIELLAAAQGVDLRAPHATSPALQHAMKTIRADVAHYDLDHYFAPDIAVVARRVRERAFATLSPLSFESEQ</sequence>